<gene>
    <name type="primary">Mknk2</name>
</gene>
<organism>
    <name type="scientific">Rattus norvegicus</name>
    <name type="common">Rat</name>
    <dbReference type="NCBI Taxonomy" id="10116"/>
    <lineage>
        <taxon>Eukaryota</taxon>
        <taxon>Metazoa</taxon>
        <taxon>Chordata</taxon>
        <taxon>Craniata</taxon>
        <taxon>Vertebrata</taxon>
        <taxon>Euteleostomi</taxon>
        <taxon>Mammalia</taxon>
        <taxon>Eutheria</taxon>
        <taxon>Euarchontoglires</taxon>
        <taxon>Glires</taxon>
        <taxon>Rodentia</taxon>
        <taxon>Myomorpha</taxon>
        <taxon>Muroidea</taxon>
        <taxon>Muridae</taxon>
        <taxon>Murinae</taxon>
        <taxon>Rattus</taxon>
    </lineage>
</organism>
<comment type="function">
    <text evidence="1">Serine/threonine-protein kinase that phosphorylates SFPQ/PSF, HNRNPA1 and EIF4E. May play a role in the response to environmental stress and cytokines. Appears to regulate translation by phosphorylating EIF4E, thus increasing the affinity of this protein for the 7-methylguanosine-containing mRNA cap. Required for mediating PP2A-inhibition-induced EIF4E phosphorylation. Triggers EIF4E shuttling from cytoplasm to nucleus. Enhances the formation of EIF4F complex in pachytene spermatocytes, thus promoting mRNA translation during spermatogenesis. Displays a high basal kinase activity. Acts as a mediator of the suppressive effects of IFNgamma on hematopoiesis. Negative regulator for signals that control generation of arsenic trioxide As(2)O(3)-dependent apoptosis and anti-leukemic responses. Involved in anti-apoptotic signaling in response to serum withdrawal (By similarity).</text>
</comment>
<comment type="catalytic activity">
    <reaction>
        <text>L-seryl-[protein] + ATP = O-phospho-L-seryl-[protein] + ADP + H(+)</text>
        <dbReference type="Rhea" id="RHEA:17989"/>
        <dbReference type="Rhea" id="RHEA-COMP:9863"/>
        <dbReference type="Rhea" id="RHEA-COMP:11604"/>
        <dbReference type="ChEBI" id="CHEBI:15378"/>
        <dbReference type="ChEBI" id="CHEBI:29999"/>
        <dbReference type="ChEBI" id="CHEBI:30616"/>
        <dbReference type="ChEBI" id="CHEBI:83421"/>
        <dbReference type="ChEBI" id="CHEBI:456216"/>
        <dbReference type="EC" id="2.7.11.1"/>
    </reaction>
</comment>
<comment type="catalytic activity">
    <reaction>
        <text>L-threonyl-[protein] + ATP = O-phospho-L-threonyl-[protein] + ADP + H(+)</text>
        <dbReference type="Rhea" id="RHEA:46608"/>
        <dbReference type="Rhea" id="RHEA-COMP:11060"/>
        <dbReference type="Rhea" id="RHEA-COMP:11605"/>
        <dbReference type="ChEBI" id="CHEBI:15378"/>
        <dbReference type="ChEBI" id="CHEBI:30013"/>
        <dbReference type="ChEBI" id="CHEBI:30616"/>
        <dbReference type="ChEBI" id="CHEBI:61977"/>
        <dbReference type="ChEBI" id="CHEBI:456216"/>
        <dbReference type="EC" id="2.7.11.1"/>
    </reaction>
</comment>
<comment type="cofactor">
    <cofactor evidence="1">
        <name>Mg(2+)</name>
        <dbReference type="ChEBI" id="CHEBI:18420"/>
    </cofactor>
</comment>
<comment type="cofactor">
    <cofactor evidence="1">
        <name>Zn(2+)</name>
        <dbReference type="ChEBI" id="CHEBI:29105"/>
    </cofactor>
    <text evidence="1">Binds 1 zinc ion per subunit.</text>
</comment>
<comment type="activity regulation">
    <text evidence="1">Inhibited by CGP57380 and staurosporine.</text>
</comment>
<comment type="subunit">
    <text evidence="1">Monomer. Interacts with the C-terminal regions of EIF4G1 and EIF4G2; this interaction is promoted when MAPK pathways are repressed but repressed upon ERK proteins activation. Also binds to dephosphorylated MAPK3/ERK1 and MAPK1/ER2K. Interaction with phosphorylated MAPK3/ERK1 and MAPK1/ER2K protects it from dephosphorylation and inactivation. Interacts with ESR2 and EIF4E in the nucleus (By similarity).</text>
</comment>
<comment type="subcellular location">
    <subcellularLocation>
        <location evidence="1">Cytoplasm</location>
    </subcellularLocation>
    <subcellularLocation>
        <location evidence="1">Nucleus</location>
        <location evidence="1">PML body</location>
    </subcellularLocation>
</comment>
<comment type="PTM">
    <text evidence="1">Dual phosphorylation of Thr-244 and Thr-249 activates the kinase. Phosphorylation of Thr-379 activates the kinase. Phosphorylated upon arsenic trioxide As(2)O(3) treatment. Phosphorylated by MAPK1/ERK2, MAPK11 and MAPK14. Dephosphorylated by PP2A (By similarity).</text>
</comment>
<comment type="similarity">
    <text evidence="7">Belongs to the protein kinase superfamily. CAMK Ser/Thr protein kinase family.</text>
</comment>
<name>MKNK2_RAT</name>
<proteinExistence type="evidence at transcript level"/>
<accession>Q5U2N4</accession>
<sequence length="459" mass="51574">MVQKRTAELQGFHRSFKGQNPFELAFTLDPAQHGDSDFSPQCEARPDMPSSQPIDIPDAKKRGRKKKRCRATDSFSGRFEDVYQLQEDVLGEGAHARVQTCVNLITNQEYAVKIIEKQLGHIRSRVFREVEMLYQCQGHRNVLELIEFFEEEDRFYLVFEKMRGGSILSHIHRRRHFNELEASVVVQDVASALDFLHNKGIAHRDLKPENILCEHPNQVSPVKICDFDLGSGIKLNGDCSPISTPELLTPCGSAEYMAPEVVEAFSEEASIYDKRCDLWSLGVILYILLSGYPPFVGHCGSDCGWDRGEACPACQNMLFESIQEGKYEFPDKDWSHISFAAKDLISKLLVRDAKQRLSAAQVLQHPWVQGCAPENTLPTPLVLQRNSCAKDLTSFAAEAIAMNRQLAQCEEDAGQDQPVLIRATSRCLQLSPPSQSKLAQRRQRASLSATPVVLVGDRV</sequence>
<dbReference type="EC" id="2.7.11.1"/>
<dbReference type="EMBL" id="BC085941">
    <property type="protein sequence ID" value="AAH85941.1"/>
    <property type="molecule type" value="mRNA"/>
</dbReference>
<dbReference type="RefSeq" id="NP_001011985.1">
    <property type="nucleotide sequence ID" value="NM_001011985.2"/>
</dbReference>
<dbReference type="RefSeq" id="XP_063119244.1">
    <property type="nucleotide sequence ID" value="XM_063263174.1"/>
</dbReference>
<dbReference type="SMR" id="Q5U2N4"/>
<dbReference type="FunCoup" id="Q5U2N4">
    <property type="interactions" value="1555"/>
</dbReference>
<dbReference type="STRING" id="10116.ENSRNOP00000039672"/>
<dbReference type="PhosphoSitePlus" id="Q5U2N4"/>
<dbReference type="PaxDb" id="10116-ENSRNOP00000039672"/>
<dbReference type="Ensembl" id="ENSRNOT00000041106.6">
    <property type="protein sequence ID" value="ENSRNOP00000039672.3"/>
    <property type="gene ID" value="ENSRNOG00000029028.6"/>
</dbReference>
<dbReference type="GeneID" id="299618"/>
<dbReference type="KEGG" id="rno:299618"/>
<dbReference type="UCSC" id="RGD:1305728">
    <property type="organism name" value="rat"/>
</dbReference>
<dbReference type="AGR" id="RGD:1305728"/>
<dbReference type="CTD" id="2872"/>
<dbReference type="RGD" id="1305728">
    <property type="gene designation" value="Mknk2"/>
</dbReference>
<dbReference type="eggNOG" id="KOG0607">
    <property type="taxonomic scope" value="Eukaryota"/>
</dbReference>
<dbReference type="GeneTree" id="ENSGT00940000154587"/>
<dbReference type="HOGENOM" id="CLU_000288_63_0_1"/>
<dbReference type="InParanoid" id="Q5U2N4"/>
<dbReference type="OMA" id="NKMTEVT"/>
<dbReference type="OrthoDB" id="9567at9989"/>
<dbReference type="PhylomeDB" id="Q5U2N4"/>
<dbReference type="TreeFam" id="TF314050"/>
<dbReference type="PRO" id="PR:Q5U2N4"/>
<dbReference type="Proteomes" id="UP000002494">
    <property type="component" value="Chromosome 7"/>
</dbReference>
<dbReference type="Bgee" id="ENSRNOG00000029028">
    <property type="expression patterns" value="Expressed in skeletal muscle tissue and 19 other cell types or tissues"/>
</dbReference>
<dbReference type="GO" id="GO:0005737">
    <property type="term" value="C:cytoplasm"/>
    <property type="evidence" value="ECO:0000318"/>
    <property type="project" value="GO_Central"/>
</dbReference>
<dbReference type="GO" id="GO:0005634">
    <property type="term" value="C:nucleus"/>
    <property type="evidence" value="ECO:0000318"/>
    <property type="project" value="GO_Central"/>
</dbReference>
<dbReference type="GO" id="GO:0016605">
    <property type="term" value="C:PML body"/>
    <property type="evidence" value="ECO:0007669"/>
    <property type="project" value="UniProtKB-SubCell"/>
</dbReference>
<dbReference type="GO" id="GO:0005524">
    <property type="term" value="F:ATP binding"/>
    <property type="evidence" value="ECO:0000266"/>
    <property type="project" value="RGD"/>
</dbReference>
<dbReference type="GO" id="GO:0009931">
    <property type="term" value="F:calcium-dependent protein serine/threonine kinase activity"/>
    <property type="evidence" value="ECO:0000318"/>
    <property type="project" value="GO_Central"/>
</dbReference>
<dbReference type="GO" id="GO:0004683">
    <property type="term" value="F:calcium/calmodulin-dependent protein kinase activity"/>
    <property type="evidence" value="ECO:0000318"/>
    <property type="project" value="GO_Central"/>
</dbReference>
<dbReference type="GO" id="GO:0005516">
    <property type="term" value="F:calmodulin binding"/>
    <property type="evidence" value="ECO:0000318"/>
    <property type="project" value="GO_Central"/>
</dbReference>
<dbReference type="GO" id="GO:0046872">
    <property type="term" value="F:metal ion binding"/>
    <property type="evidence" value="ECO:0007669"/>
    <property type="project" value="UniProtKB-KW"/>
</dbReference>
<dbReference type="GO" id="GO:0106310">
    <property type="term" value="F:protein serine kinase activity"/>
    <property type="evidence" value="ECO:0007669"/>
    <property type="project" value="RHEA"/>
</dbReference>
<dbReference type="GO" id="GO:0004674">
    <property type="term" value="F:protein serine/threonine kinase activity"/>
    <property type="evidence" value="ECO:0000266"/>
    <property type="project" value="RGD"/>
</dbReference>
<dbReference type="GO" id="GO:0071243">
    <property type="term" value="P:cellular response to arsenic-containing substance"/>
    <property type="evidence" value="ECO:0000266"/>
    <property type="project" value="RGD"/>
</dbReference>
<dbReference type="GO" id="GO:0097192">
    <property type="term" value="P:extrinsic apoptotic signaling pathway in absence of ligand"/>
    <property type="evidence" value="ECO:0000266"/>
    <property type="project" value="RGD"/>
</dbReference>
<dbReference type="GO" id="GO:0030097">
    <property type="term" value="P:hemopoiesis"/>
    <property type="evidence" value="ECO:0000266"/>
    <property type="project" value="RGD"/>
</dbReference>
<dbReference type="GO" id="GO:0035556">
    <property type="term" value="P:intracellular signal transduction"/>
    <property type="evidence" value="ECO:0000266"/>
    <property type="project" value="RGD"/>
</dbReference>
<dbReference type="GO" id="GO:0006417">
    <property type="term" value="P:regulation of translation"/>
    <property type="evidence" value="ECO:0007669"/>
    <property type="project" value="UniProtKB-KW"/>
</dbReference>
<dbReference type="FunFam" id="1.10.510.10:FF:000119">
    <property type="entry name" value="Putative map kinase-interacting serine/threonine-protein kinase 1"/>
    <property type="match status" value="1"/>
</dbReference>
<dbReference type="FunFam" id="3.30.200.20:FF:000093">
    <property type="entry name" value="Putative map kinase-interacting serine/threonine-protein kinase 1"/>
    <property type="match status" value="1"/>
</dbReference>
<dbReference type="Gene3D" id="3.30.200.20">
    <property type="entry name" value="Phosphorylase Kinase, domain 1"/>
    <property type="match status" value="1"/>
</dbReference>
<dbReference type="Gene3D" id="1.10.510.10">
    <property type="entry name" value="Transferase(Phosphotransferase) domain 1"/>
    <property type="match status" value="1"/>
</dbReference>
<dbReference type="InterPro" id="IPR050205">
    <property type="entry name" value="CDPK_Ser/Thr_kinases"/>
</dbReference>
<dbReference type="InterPro" id="IPR011009">
    <property type="entry name" value="Kinase-like_dom_sf"/>
</dbReference>
<dbReference type="InterPro" id="IPR000719">
    <property type="entry name" value="Prot_kinase_dom"/>
</dbReference>
<dbReference type="InterPro" id="IPR017441">
    <property type="entry name" value="Protein_kinase_ATP_BS"/>
</dbReference>
<dbReference type="InterPro" id="IPR008271">
    <property type="entry name" value="Ser/Thr_kinase_AS"/>
</dbReference>
<dbReference type="PANTHER" id="PTHR24349">
    <property type="entry name" value="SERINE/THREONINE-PROTEIN KINASE"/>
    <property type="match status" value="1"/>
</dbReference>
<dbReference type="Pfam" id="PF00069">
    <property type="entry name" value="Pkinase"/>
    <property type="match status" value="1"/>
</dbReference>
<dbReference type="SMART" id="SM00220">
    <property type="entry name" value="S_TKc"/>
    <property type="match status" value="1"/>
</dbReference>
<dbReference type="SUPFAM" id="SSF56112">
    <property type="entry name" value="Protein kinase-like (PK-like)"/>
    <property type="match status" value="1"/>
</dbReference>
<dbReference type="PROSITE" id="PS00107">
    <property type="entry name" value="PROTEIN_KINASE_ATP"/>
    <property type="match status" value="1"/>
</dbReference>
<dbReference type="PROSITE" id="PS50011">
    <property type="entry name" value="PROTEIN_KINASE_DOM"/>
    <property type="match status" value="1"/>
</dbReference>
<dbReference type="PROSITE" id="PS00108">
    <property type="entry name" value="PROTEIN_KINASE_ST"/>
    <property type="match status" value="1"/>
</dbReference>
<keyword id="KW-0053">Apoptosis</keyword>
<keyword id="KW-0067">ATP-binding</keyword>
<keyword id="KW-0963">Cytoplasm</keyword>
<keyword id="KW-0418">Kinase</keyword>
<keyword id="KW-0460">Magnesium</keyword>
<keyword id="KW-0479">Metal-binding</keyword>
<keyword id="KW-0547">Nucleotide-binding</keyword>
<keyword id="KW-0539">Nucleus</keyword>
<keyword id="KW-0597">Phosphoprotein</keyword>
<keyword id="KW-1185">Reference proteome</keyword>
<keyword id="KW-0723">Serine/threonine-protein kinase</keyword>
<keyword id="KW-0808">Transferase</keyword>
<keyword id="KW-0810">Translation regulation</keyword>
<keyword id="KW-0862">Zinc</keyword>
<protein>
    <recommendedName>
        <fullName>MAP kinase-interacting serine/threonine-protein kinase 2</fullName>
        <ecNumber>2.7.11.1</ecNumber>
    </recommendedName>
    <alternativeName>
        <fullName>MAP kinase signal-integrating kinase 2</fullName>
        <shortName>MAPK signal-integrating kinase 2</shortName>
        <shortName>Mnk2</shortName>
    </alternativeName>
</protein>
<evidence type="ECO:0000250" key="1"/>
<evidence type="ECO:0000250" key="2">
    <source>
        <dbReference type="UniProtKB" id="Q8CDB0"/>
    </source>
</evidence>
<evidence type="ECO:0000250" key="3">
    <source>
        <dbReference type="UniProtKB" id="Q9HBH9"/>
    </source>
</evidence>
<evidence type="ECO:0000255" key="4">
    <source>
        <dbReference type="PROSITE-ProRule" id="PRU00159"/>
    </source>
</evidence>
<evidence type="ECO:0000255" key="5">
    <source>
        <dbReference type="PROSITE-ProRule" id="PRU10027"/>
    </source>
</evidence>
<evidence type="ECO:0000256" key="6">
    <source>
        <dbReference type="SAM" id="MobiDB-lite"/>
    </source>
</evidence>
<evidence type="ECO:0000305" key="7"/>
<reference key="1">
    <citation type="journal article" date="2004" name="Genome Res.">
        <title>The status, quality, and expansion of the NIH full-length cDNA project: the Mammalian Gene Collection (MGC).</title>
        <authorList>
            <consortium name="The MGC Project Team"/>
        </authorList>
    </citation>
    <scope>NUCLEOTIDE SEQUENCE [LARGE SCALE MRNA]</scope>
    <source>
        <tissue>Lung</tissue>
    </source>
</reference>
<feature type="chain" id="PRO_0000226965" description="MAP kinase-interacting serine/threonine-protein kinase 2">
    <location>
        <begin position="1"/>
        <end position="459"/>
    </location>
</feature>
<feature type="domain" description="Protein kinase" evidence="4">
    <location>
        <begin position="84"/>
        <end position="368"/>
    </location>
</feature>
<feature type="region of interest" description="Disordered" evidence="6">
    <location>
        <begin position="28"/>
        <end position="67"/>
    </location>
</feature>
<feature type="short sequence motif" description="Nuclear localization signal" evidence="1">
    <location>
        <begin position="60"/>
        <end position="66"/>
    </location>
</feature>
<feature type="short sequence motif" description="MAP kinase binding" evidence="1">
    <location>
        <begin position="438"/>
        <end position="442"/>
    </location>
</feature>
<feature type="active site" description="Proton acceptor" evidence="4 5">
    <location>
        <position position="205"/>
    </location>
</feature>
<feature type="binding site" evidence="4">
    <location>
        <begin position="90"/>
        <end position="98"/>
    </location>
    <ligand>
        <name>ATP</name>
        <dbReference type="ChEBI" id="CHEBI:30616"/>
    </ligand>
</feature>
<feature type="binding site" evidence="4">
    <location>
        <position position="113"/>
    </location>
    <ligand>
        <name>ATP</name>
        <dbReference type="ChEBI" id="CHEBI:30616"/>
    </ligand>
</feature>
<feature type="binding site" evidence="1">
    <location>
        <begin position="160"/>
        <end position="162"/>
    </location>
    <ligand>
        <name>staurosporine</name>
        <dbReference type="ChEBI" id="CHEBI:57491"/>
    </ligand>
</feature>
<feature type="binding site" evidence="1">
    <location>
        <position position="209"/>
    </location>
    <ligand>
        <name>staurosporine</name>
        <dbReference type="ChEBI" id="CHEBI:57491"/>
    </ligand>
</feature>
<feature type="binding site" evidence="1">
    <location>
        <position position="299"/>
    </location>
    <ligand>
        <name>Zn(2+)</name>
        <dbReference type="ChEBI" id="CHEBI:29105"/>
    </ligand>
</feature>
<feature type="binding site" evidence="1">
    <location>
        <position position="311"/>
    </location>
    <ligand>
        <name>Zn(2+)</name>
        <dbReference type="ChEBI" id="CHEBI:29105"/>
    </ligand>
</feature>
<feature type="binding site" evidence="1">
    <location>
        <position position="314"/>
    </location>
    <ligand>
        <name>Zn(2+)</name>
        <dbReference type="ChEBI" id="CHEBI:29105"/>
    </ligand>
</feature>
<feature type="modified residue" description="Phosphoserine" evidence="2">
    <location>
        <position position="74"/>
    </location>
</feature>
<feature type="modified residue" description="Phosphothreonine" evidence="3">
    <location>
        <position position="244"/>
    </location>
</feature>
<feature type="modified residue" description="Phosphothreonine" evidence="3">
    <location>
        <position position="249"/>
    </location>
</feature>
<feature type="modified residue" description="Phosphothreonine" evidence="3">
    <location>
        <position position="379"/>
    </location>
</feature>
<feature type="modified residue" description="Phosphoserine" evidence="2">
    <location>
        <position position="431"/>
    </location>
</feature>
<feature type="modified residue" description="Phosphoserine" evidence="2">
    <location>
        <position position="434"/>
    </location>
</feature>
<feature type="modified residue" description="Phosphoserine" evidence="3">
    <location>
        <position position="446"/>
    </location>
</feature>
<feature type="modified residue" description="Phosphothreonine" evidence="2">
    <location>
        <position position="450"/>
    </location>
</feature>